<feature type="chain" id="PRO_0000078517" description="Chaperone protein dnaK2">
    <location>
        <begin position="1"/>
        <end position="634"/>
    </location>
</feature>
<feature type="region of interest" description="Disordered" evidence="2">
    <location>
        <begin position="592"/>
        <end position="634"/>
    </location>
</feature>
<feature type="compositionally biased region" description="Acidic residues" evidence="2">
    <location>
        <begin position="622"/>
        <end position="634"/>
    </location>
</feature>
<feature type="modified residue" description="Phosphothreonine; by autocatalysis" evidence="1">
    <location>
        <position position="197"/>
    </location>
</feature>
<dbReference type="EMBL" id="BX548174">
    <property type="protein sequence ID" value="CAE20163.1"/>
    <property type="molecule type" value="Genomic_DNA"/>
</dbReference>
<dbReference type="SMR" id="Q7UZG3"/>
<dbReference type="STRING" id="59919.PMM1704"/>
<dbReference type="KEGG" id="pmm:PMM1704"/>
<dbReference type="eggNOG" id="COG0443">
    <property type="taxonomic scope" value="Bacteria"/>
</dbReference>
<dbReference type="HOGENOM" id="CLU_005965_2_1_3"/>
<dbReference type="OrthoDB" id="9766019at2"/>
<dbReference type="Proteomes" id="UP000001026">
    <property type="component" value="Chromosome"/>
</dbReference>
<dbReference type="GO" id="GO:0005524">
    <property type="term" value="F:ATP binding"/>
    <property type="evidence" value="ECO:0007669"/>
    <property type="project" value="UniProtKB-UniRule"/>
</dbReference>
<dbReference type="GO" id="GO:0140662">
    <property type="term" value="F:ATP-dependent protein folding chaperone"/>
    <property type="evidence" value="ECO:0007669"/>
    <property type="project" value="InterPro"/>
</dbReference>
<dbReference type="GO" id="GO:0051082">
    <property type="term" value="F:unfolded protein binding"/>
    <property type="evidence" value="ECO:0007669"/>
    <property type="project" value="InterPro"/>
</dbReference>
<dbReference type="CDD" id="cd10234">
    <property type="entry name" value="ASKHA_NBD_HSP70_DnaK-like"/>
    <property type="match status" value="1"/>
</dbReference>
<dbReference type="FunFam" id="2.60.34.10:FF:000014">
    <property type="entry name" value="Chaperone protein DnaK HSP70"/>
    <property type="match status" value="1"/>
</dbReference>
<dbReference type="FunFam" id="1.20.1270.10:FF:000001">
    <property type="entry name" value="Molecular chaperone DnaK"/>
    <property type="match status" value="1"/>
</dbReference>
<dbReference type="FunFam" id="3.30.420.40:FF:000004">
    <property type="entry name" value="Molecular chaperone DnaK"/>
    <property type="match status" value="1"/>
</dbReference>
<dbReference type="FunFam" id="3.90.640.10:FF:000003">
    <property type="entry name" value="Molecular chaperone DnaK"/>
    <property type="match status" value="1"/>
</dbReference>
<dbReference type="Gene3D" id="1.20.1270.10">
    <property type="match status" value="1"/>
</dbReference>
<dbReference type="Gene3D" id="3.30.420.40">
    <property type="match status" value="2"/>
</dbReference>
<dbReference type="Gene3D" id="3.90.640.10">
    <property type="entry name" value="Actin, Chain A, domain 4"/>
    <property type="match status" value="1"/>
</dbReference>
<dbReference type="Gene3D" id="2.60.34.10">
    <property type="entry name" value="Substrate Binding Domain Of DNAk, Chain A, domain 1"/>
    <property type="match status" value="1"/>
</dbReference>
<dbReference type="HAMAP" id="MF_00332">
    <property type="entry name" value="DnaK"/>
    <property type="match status" value="1"/>
</dbReference>
<dbReference type="InterPro" id="IPR043129">
    <property type="entry name" value="ATPase_NBD"/>
</dbReference>
<dbReference type="InterPro" id="IPR012725">
    <property type="entry name" value="Chaperone_DnaK"/>
</dbReference>
<dbReference type="InterPro" id="IPR018181">
    <property type="entry name" value="Heat_shock_70_CS"/>
</dbReference>
<dbReference type="InterPro" id="IPR029048">
    <property type="entry name" value="HSP70_C_sf"/>
</dbReference>
<dbReference type="InterPro" id="IPR029047">
    <property type="entry name" value="HSP70_peptide-bd_sf"/>
</dbReference>
<dbReference type="InterPro" id="IPR013126">
    <property type="entry name" value="Hsp_70_fam"/>
</dbReference>
<dbReference type="NCBIfam" id="NF001413">
    <property type="entry name" value="PRK00290.1"/>
    <property type="match status" value="1"/>
</dbReference>
<dbReference type="NCBIfam" id="NF003520">
    <property type="entry name" value="PRK05183.1"/>
    <property type="match status" value="1"/>
</dbReference>
<dbReference type="NCBIfam" id="TIGR02350">
    <property type="entry name" value="prok_dnaK"/>
    <property type="match status" value="1"/>
</dbReference>
<dbReference type="PANTHER" id="PTHR19375">
    <property type="entry name" value="HEAT SHOCK PROTEIN 70KDA"/>
    <property type="match status" value="1"/>
</dbReference>
<dbReference type="Pfam" id="PF00012">
    <property type="entry name" value="HSP70"/>
    <property type="match status" value="1"/>
</dbReference>
<dbReference type="PRINTS" id="PR00301">
    <property type="entry name" value="HEATSHOCK70"/>
</dbReference>
<dbReference type="SUPFAM" id="SSF53067">
    <property type="entry name" value="Actin-like ATPase domain"/>
    <property type="match status" value="2"/>
</dbReference>
<dbReference type="SUPFAM" id="SSF100934">
    <property type="entry name" value="Heat shock protein 70kD (HSP70), C-terminal subdomain"/>
    <property type="match status" value="1"/>
</dbReference>
<dbReference type="SUPFAM" id="SSF100920">
    <property type="entry name" value="Heat shock protein 70kD (HSP70), peptide-binding domain"/>
    <property type="match status" value="1"/>
</dbReference>
<dbReference type="PROSITE" id="PS00297">
    <property type="entry name" value="HSP70_1"/>
    <property type="match status" value="1"/>
</dbReference>
<dbReference type="PROSITE" id="PS00329">
    <property type="entry name" value="HSP70_2"/>
    <property type="match status" value="1"/>
</dbReference>
<dbReference type="PROSITE" id="PS01036">
    <property type="entry name" value="HSP70_3"/>
    <property type="match status" value="1"/>
</dbReference>
<accession>Q7UZG3</accession>
<gene>
    <name type="primary">dnaK2</name>
    <name type="ordered locus">PMM1704</name>
</gene>
<evidence type="ECO:0000250" key="1"/>
<evidence type="ECO:0000256" key="2">
    <source>
        <dbReference type="SAM" id="MobiDB-lite"/>
    </source>
</evidence>
<evidence type="ECO:0000305" key="3"/>
<protein>
    <recommendedName>
        <fullName>Chaperone protein dnaK2</fullName>
    </recommendedName>
    <alternativeName>
        <fullName>HSP70-2</fullName>
    </alternativeName>
    <alternativeName>
        <fullName>Heat shock 70 kDa protein 2</fullName>
    </alternativeName>
    <alternativeName>
        <fullName>Heat shock protein 70-2</fullName>
    </alternativeName>
</protein>
<proteinExistence type="inferred from homology"/>
<organism>
    <name type="scientific">Prochlorococcus marinus subsp. pastoris (strain CCMP1986 / NIES-2087 / MED4)</name>
    <dbReference type="NCBI Taxonomy" id="59919"/>
    <lineage>
        <taxon>Bacteria</taxon>
        <taxon>Bacillati</taxon>
        <taxon>Cyanobacteriota</taxon>
        <taxon>Cyanophyceae</taxon>
        <taxon>Synechococcales</taxon>
        <taxon>Prochlorococcaceae</taxon>
        <taxon>Prochlorococcus</taxon>
    </lineage>
</organism>
<name>DNAK2_PROMP</name>
<comment type="function">
    <text evidence="1">Acts as a chaperone.</text>
</comment>
<comment type="induction">
    <text evidence="1">By stress conditions e.g. heat shock (By similarity).</text>
</comment>
<comment type="similarity">
    <text evidence="3">Belongs to the heat shock protein 70 family.</text>
</comment>
<reference key="1">
    <citation type="journal article" date="2003" name="Nature">
        <title>Genome divergence in two Prochlorococcus ecotypes reflects oceanic niche differentiation.</title>
        <authorList>
            <person name="Rocap G."/>
            <person name="Larimer F.W."/>
            <person name="Lamerdin J.E."/>
            <person name="Malfatti S."/>
            <person name="Chain P."/>
            <person name="Ahlgren N.A."/>
            <person name="Arellano A."/>
            <person name="Coleman M."/>
            <person name="Hauser L."/>
            <person name="Hess W.R."/>
            <person name="Johnson Z.I."/>
            <person name="Land M.L."/>
            <person name="Lindell D."/>
            <person name="Post A.F."/>
            <person name="Regala W."/>
            <person name="Shah M."/>
            <person name="Shaw S.L."/>
            <person name="Steglich C."/>
            <person name="Sullivan M.B."/>
            <person name="Ting C.S."/>
            <person name="Tolonen A."/>
            <person name="Webb E.A."/>
            <person name="Zinser E.R."/>
            <person name="Chisholm S.W."/>
        </authorList>
    </citation>
    <scope>NUCLEOTIDE SEQUENCE [LARGE SCALE GENOMIC DNA]</scope>
    <source>
        <strain>CCMP1986 / NIES-2087 / MED4</strain>
    </source>
</reference>
<keyword id="KW-0067">ATP-binding</keyword>
<keyword id="KW-0143">Chaperone</keyword>
<keyword id="KW-0547">Nucleotide-binding</keyword>
<keyword id="KW-0597">Phosphoprotein</keyword>
<keyword id="KW-0346">Stress response</keyword>
<sequence length="634" mass="68244">MGKVVGIDLGTTNSCVAVMEGGKPTVIANAEGFRTTPSVVAYTKNQDQLVGQIAKRQAVMNPENTFYSAKRFVGRRVDEVNEESKEVSYGIEKAGSNVKLKCPVLDKQFSPEEVSAQVLRKLSEDAGKYLGENITQAVITVPAYFNDSQRQATKDAGKIAGLEVLRIINEPTAAALAYGLDKKSNERILVFDLGGGTFDVSVLEVGDGVFEVLSTSGDTHLGGDDFDRCIVDHLASIFKSNEGIDLRQDKQALQRLTEAAEKAKIELSNATQSEINLPFITATPEGPKHLDLNLTRANFEELASKLIDRCRVPVEQALKDAKLSTGEIDEIVMVGGSTRMPAVQELVKRVTGKDPNQTVNPDEVVAVGAAIQGGVLAGEVKDILLLDVTPLSLGVETLGGVMTKMITRNTTVPTKKSETYSTAVDGQTNVEIHVLQGEREMASDNKSLGTFRLDGIPSAPRGVPQIEVTFDIDANGILSVTAKDKGSGKEQSISITGASTLSDNEVDKMVKDAESNASVDKEKREKIDLKNQAETLVYQTEKQLGELGDKVDASAKAKVEEKSKALKEATSKEDYEAMKKLLEELQQELYAIGSSVYQQPGNQPPAPGTPDSNESNDKGGDDDVIDADFTETKD</sequence>